<gene>
    <name type="primary">MT-CYB</name>
    <name type="synonym">COB</name>
    <name type="synonym">CYTB</name>
    <name type="synonym">MTCYB</name>
</gene>
<accession>Q35066</accession>
<comment type="function">
    <text evidence="2">Component of the ubiquinol-cytochrome c reductase complex (complex III or cytochrome b-c1 complex) that is part of the mitochondrial respiratory chain. The b-c1 complex mediates electron transfer from ubiquinol to cytochrome c. Contributes to the generation of a proton gradient across the mitochondrial membrane that is then used for ATP synthesis.</text>
</comment>
<comment type="cofactor">
    <cofactor evidence="2">
        <name>heme b</name>
        <dbReference type="ChEBI" id="CHEBI:60344"/>
    </cofactor>
    <text evidence="2">Binds 2 heme b groups non-covalently.</text>
</comment>
<comment type="subunit">
    <text evidence="2">The cytochrome bc1 complex contains 11 subunits: 3 respiratory subunits (MT-CYB, CYC1 and UQCRFS1), 2 core proteins (UQCRC1 and UQCRC2) and 6 low-molecular weight proteins (UQCRH/QCR6, UQCRB/QCR7, UQCRQ/QCR8, UQCR10/QCR9, UQCR11/QCR10 and a cleavage product of UQCRFS1). This cytochrome bc1 complex then forms a dimer.</text>
</comment>
<comment type="subcellular location">
    <subcellularLocation>
        <location evidence="2">Mitochondrion inner membrane</location>
        <topology evidence="2">Multi-pass membrane protein</topology>
    </subcellularLocation>
</comment>
<comment type="miscellaneous">
    <text evidence="1">Heme 1 (or BL or b562) is low-potential and absorbs at about 562 nm, and heme 2 (or BH or b566) is high-potential and absorbs at about 566 nm.</text>
</comment>
<comment type="similarity">
    <text evidence="3 4">Belongs to the cytochrome b family.</text>
</comment>
<comment type="caution">
    <text evidence="2">The full-length protein contains only eight transmembrane helices, not nine as predicted by bioinformatics tools.</text>
</comment>
<evidence type="ECO:0000250" key="1"/>
<evidence type="ECO:0000250" key="2">
    <source>
        <dbReference type="UniProtKB" id="P00157"/>
    </source>
</evidence>
<evidence type="ECO:0000255" key="3">
    <source>
        <dbReference type="PROSITE-ProRule" id="PRU00967"/>
    </source>
</evidence>
<evidence type="ECO:0000255" key="4">
    <source>
        <dbReference type="PROSITE-ProRule" id="PRU00968"/>
    </source>
</evidence>
<keyword id="KW-0249">Electron transport</keyword>
<keyword id="KW-0349">Heme</keyword>
<keyword id="KW-0408">Iron</keyword>
<keyword id="KW-0472">Membrane</keyword>
<keyword id="KW-0479">Metal-binding</keyword>
<keyword id="KW-0496">Mitochondrion</keyword>
<keyword id="KW-0999">Mitochondrion inner membrane</keyword>
<keyword id="KW-0679">Respiratory chain</keyword>
<keyword id="KW-0812">Transmembrane</keyword>
<keyword id="KW-1133">Transmembrane helix</keyword>
<keyword id="KW-0813">Transport</keyword>
<keyword id="KW-0830">Ubiquinone</keyword>
<proteinExistence type="inferred from homology"/>
<name>CYB_MESPE</name>
<protein>
    <recommendedName>
        <fullName>Cytochrome b</fullName>
    </recommendedName>
    <alternativeName>
        <fullName>Complex III subunit 3</fullName>
    </alternativeName>
    <alternativeName>
        <fullName>Complex III subunit III</fullName>
    </alternativeName>
    <alternativeName>
        <fullName>Cytochrome b-c1 complex subunit 3</fullName>
    </alternativeName>
    <alternativeName>
        <fullName>Ubiquinol-cytochrome-c reductase complex cytochrome b subunit</fullName>
    </alternativeName>
</protein>
<reference key="1">
    <citation type="journal article" date="2000" name="Proc. Natl. Acad. Sci. U.S.A.">
        <title>Independent adaptation to riverine habitats allowed survival of ancient cetacean lineages.</title>
        <authorList>
            <person name="Cassens I."/>
            <person name="Vicario S."/>
            <person name="Waddell V.G."/>
            <person name="Balchowsky H."/>
            <person name="Van Belle D."/>
            <person name="Ding W."/>
            <person name="Fan C."/>
            <person name="Mohan L."/>
            <person name="Simoes-Lopes P.C."/>
            <person name="Bastida R."/>
            <person name="Meyer A."/>
            <person name="Stanhope M.J."/>
            <person name="Milinkovitch M.C."/>
        </authorList>
    </citation>
    <scope>NUCLEOTIDE SEQUENCE [GENOMIC DNA]</scope>
</reference>
<reference key="2">
    <citation type="journal article" date="1994" name="Mol. Biol. Evol.">
        <title>Phylogeny of all major groups of cetaceans based on DNA sequences from three mitochondrial genes.</title>
        <authorList>
            <person name="Milinkovitch M.C."/>
            <person name="Meyer A."/>
            <person name="Powell J.R."/>
        </authorList>
    </citation>
    <scope>NUCLEOTIDE SEQUENCE [GENOMIC DNA] OF 1-134</scope>
</reference>
<geneLocation type="mitochondrion"/>
<sequence length="379" mass="43066">MTNIRKTHPLMKIVNNAFIDLPTPSNISSWWNFGSLLGLCLIMQILTGLFLAMHYTPDTTTAFSSVMHICRDVNYGWIIRYLHANGASMFFICLYAHIGRGLYYGSYIFQETWNIGVILLFTVMATAFVGYVLPWGQMSFWGATVITNLLSAIPYIGTTLVEWIWGGFSVDKATLTRFFAFHFILPFIILALTIVHLLFLHETGSNNPMGISSDMDKIPFHPYYTIKDILGALLLIMVLLMLTLFAPDLLGDPDNYTPANPLSTPAHIKPEWYFLFAYAILRSVPNKLGGVLALLLSILILLFIPLLHTSKQRSMMFRPFSQFLFWLLVADFLTLTWIGGQPVEYPYMVMGQLASILYFLLILVLMPMASLIENKLLKW</sequence>
<dbReference type="EMBL" id="AF304074">
    <property type="protein sequence ID" value="AAC48451.2"/>
    <property type="molecule type" value="Genomic_DNA"/>
</dbReference>
<dbReference type="SMR" id="Q35066"/>
<dbReference type="GO" id="GO:0005743">
    <property type="term" value="C:mitochondrial inner membrane"/>
    <property type="evidence" value="ECO:0007669"/>
    <property type="project" value="UniProtKB-SubCell"/>
</dbReference>
<dbReference type="GO" id="GO:0045275">
    <property type="term" value="C:respiratory chain complex III"/>
    <property type="evidence" value="ECO:0007669"/>
    <property type="project" value="InterPro"/>
</dbReference>
<dbReference type="GO" id="GO:0046872">
    <property type="term" value="F:metal ion binding"/>
    <property type="evidence" value="ECO:0007669"/>
    <property type="project" value="UniProtKB-KW"/>
</dbReference>
<dbReference type="GO" id="GO:0008121">
    <property type="term" value="F:ubiquinol-cytochrome-c reductase activity"/>
    <property type="evidence" value="ECO:0007669"/>
    <property type="project" value="InterPro"/>
</dbReference>
<dbReference type="GO" id="GO:0006122">
    <property type="term" value="P:mitochondrial electron transport, ubiquinol to cytochrome c"/>
    <property type="evidence" value="ECO:0007669"/>
    <property type="project" value="TreeGrafter"/>
</dbReference>
<dbReference type="CDD" id="cd00290">
    <property type="entry name" value="cytochrome_b_C"/>
    <property type="match status" value="1"/>
</dbReference>
<dbReference type="CDD" id="cd00284">
    <property type="entry name" value="Cytochrome_b_N"/>
    <property type="match status" value="1"/>
</dbReference>
<dbReference type="FunFam" id="1.20.810.10:FF:000002">
    <property type="entry name" value="Cytochrome b"/>
    <property type="match status" value="1"/>
</dbReference>
<dbReference type="Gene3D" id="1.20.810.10">
    <property type="entry name" value="Cytochrome Bc1 Complex, Chain C"/>
    <property type="match status" value="1"/>
</dbReference>
<dbReference type="InterPro" id="IPR005798">
    <property type="entry name" value="Cyt_b/b6_C"/>
</dbReference>
<dbReference type="InterPro" id="IPR036150">
    <property type="entry name" value="Cyt_b/b6_C_sf"/>
</dbReference>
<dbReference type="InterPro" id="IPR005797">
    <property type="entry name" value="Cyt_b/b6_N"/>
</dbReference>
<dbReference type="InterPro" id="IPR027387">
    <property type="entry name" value="Cytb/b6-like_sf"/>
</dbReference>
<dbReference type="InterPro" id="IPR030689">
    <property type="entry name" value="Cytochrome_b"/>
</dbReference>
<dbReference type="InterPro" id="IPR048260">
    <property type="entry name" value="Cytochrome_b_C_euk/bac"/>
</dbReference>
<dbReference type="InterPro" id="IPR048259">
    <property type="entry name" value="Cytochrome_b_N_euk/bac"/>
</dbReference>
<dbReference type="InterPro" id="IPR016174">
    <property type="entry name" value="Di-haem_cyt_TM"/>
</dbReference>
<dbReference type="PANTHER" id="PTHR19271">
    <property type="entry name" value="CYTOCHROME B"/>
    <property type="match status" value="1"/>
</dbReference>
<dbReference type="PANTHER" id="PTHR19271:SF16">
    <property type="entry name" value="CYTOCHROME B"/>
    <property type="match status" value="1"/>
</dbReference>
<dbReference type="Pfam" id="PF00032">
    <property type="entry name" value="Cytochrom_B_C"/>
    <property type="match status" value="1"/>
</dbReference>
<dbReference type="Pfam" id="PF00033">
    <property type="entry name" value="Cytochrome_B"/>
    <property type="match status" value="1"/>
</dbReference>
<dbReference type="PIRSF" id="PIRSF038885">
    <property type="entry name" value="COB"/>
    <property type="match status" value="1"/>
</dbReference>
<dbReference type="SUPFAM" id="SSF81648">
    <property type="entry name" value="a domain/subunit of cytochrome bc1 complex (Ubiquinol-cytochrome c reductase)"/>
    <property type="match status" value="1"/>
</dbReference>
<dbReference type="SUPFAM" id="SSF81342">
    <property type="entry name" value="Transmembrane di-heme cytochromes"/>
    <property type="match status" value="1"/>
</dbReference>
<dbReference type="PROSITE" id="PS51003">
    <property type="entry name" value="CYTB_CTER"/>
    <property type="match status" value="1"/>
</dbReference>
<dbReference type="PROSITE" id="PS51002">
    <property type="entry name" value="CYTB_NTER"/>
    <property type="match status" value="1"/>
</dbReference>
<feature type="chain" id="PRO_0000061173" description="Cytochrome b">
    <location>
        <begin position="1"/>
        <end position="379"/>
    </location>
</feature>
<feature type="transmembrane region" description="Helical" evidence="2">
    <location>
        <begin position="33"/>
        <end position="53"/>
    </location>
</feature>
<feature type="transmembrane region" description="Helical" evidence="2">
    <location>
        <begin position="77"/>
        <end position="98"/>
    </location>
</feature>
<feature type="transmembrane region" description="Helical" evidence="2">
    <location>
        <begin position="113"/>
        <end position="133"/>
    </location>
</feature>
<feature type="transmembrane region" description="Helical" evidence="2">
    <location>
        <begin position="178"/>
        <end position="198"/>
    </location>
</feature>
<feature type="transmembrane region" description="Helical" evidence="2">
    <location>
        <begin position="226"/>
        <end position="246"/>
    </location>
</feature>
<feature type="transmembrane region" description="Helical" evidence="2">
    <location>
        <begin position="288"/>
        <end position="308"/>
    </location>
</feature>
<feature type="transmembrane region" description="Helical" evidence="2">
    <location>
        <begin position="320"/>
        <end position="340"/>
    </location>
</feature>
<feature type="transmembrane region" description="Helical" evidence="2">
    <location>
        <begin position="347"/>
        <end position="367"/>
    </location>
</feature>
<feature type="binding site" description="axial binding residue" evidence="2">
    <location>
        <position position="83"/>
    </location>
    <ligand>
        <name>heme b</name>
        <dbReference type="ChEBI" id="CHEBI:60344"/>
        <label>b562</label>
    </ligand>
    <ligandPart>
        <name>Fe</name>
        <dbReference type="ChEBI" id="CHEBI:18248"/>
    </ligandPart>
</feature>
<feature type="binding site" description="axial binding residue" evidence="2">
    <location>
        <position position="97"/>
    </location>
    <ligand>
        <name>heme b</name>
        <dbReference type="ChEBI" id="CHEBI:60344"/>
        <label>b566</label>
    </ligand>
    <ligandPart>
        <name>Fe</name>
        <dbReference type="ChEBI" id="CHEBI:18248"/>
    </ligandPart>
</feature>
<feature type="binding site" description="axial binding residue" evidence="2">
    <location>
        <position position="182"/>
    </location>
    <ligand>
        <name>heme b</name>
        <dbReference type="ChEBI" id="CHEBI:60344"/>
        <label>b562</label>
    </ligand>
    <ligandPart>
        <name>Fe</name>
        <dbReference type="ChEBI" id="CHEBI:18248"/>
    </ligandPart>
</feature>
<feature type="binding site" description="axial binding residue" evidence="2">
    <location>
        <position position="196"/>
    </location>
    <ligand>
        <name>heme b</name>
        <dbReference type="ChEBI" id="CHEBI:60344"/>
        <label>b566</label>
    </ligand>
    <ligandPart>
        <name>Fe</name>
        <dbReference type="ChEBI" id="CHEBI:18248"/>
    </ligandPart>
</feature>
<feature type="binding site" evidence="2">
    <location>
        <position position="201"/>
    </location>
    <ligand>
        <name>a ubiquinone</name>
        <dbReference type="ChEBI" id="CHEBI:16389"/>
    </ligand>
</feature>
<organism>
    <name type="scientific">Mesoplodon peruvianus</name>
    <name type="common">Peruvian beaked whale</name>
    <name type="synonym">Pygmy beaked whale</name>
    <dbReference type="NCBI Taxonomy" id="27617"/>
    <lineage>
        <taxon>Eukaryota</taxon>
        <taxon>Metazoa</taxon>
        <taxon>Chordata</taxon>
        <taxon>Craniata</taxon>
        <taxon>Vertebrata</taxon>
        <taxon>Euteleostomi</taxon>
        <taxon>Mammalia</taxon>
        <taxon>Eutheria</taxon>
        <taxon>Laurasiatheria</taxon>
        <taxon>Artiodactyla</taxon>
        <taxon>Whippomorpha</taxon>
        <taxon>Cetacea</taxon>
        <taxon>Odontoceti</taxon>
        <taxon>Ziphiidae</taxon>
        <taxon>Mesoplodon</taxon>
    </lineage>
</organism>